<name>CKAP5_XENLA</name>
<protein>
    <recommendedName>
        <fullName>Cytoskeleton-associated protein 5-A</fullName>
    </recommendedName>
    <alternativeName>
        <fullName>Microtubule-associated protein 215 kDa</fullName>
    </alternativeName>
    <alternativeName>
        <fullName>XMAP215</fullName>
    </alternativeName>
</protein>
<reference key="1">
    <citation type="journal article" date="2000" name="Nat. Cell Biol.">
        <title>Control of microtubule dynamics by the antagonistic activities of XMAP215 and XKCM1 in Xenopus egg extracts.</title>
        <authorList>
            <person name="Tournebize R."/>
            <person name="Popov A."/>
            <person name="Kinoshita K."/>
            <person name="Ashford A.J."/>
            <person name="Rybina S."/>
            <person name="Pozniakovsky A."/>
            <person name="Mayer T.U."/>
            <person name="Walczak C.E."/>
            <person name="Karsenti E."/>
            <person name="Hyman A.A."/>
        </authorList>
    </citation>
    <scope>NUCLEOTIDE SEQUENCE [MRNA]</scope>
</reference>
<reference key="2">
    <citation type="journal article" date="2001" name="EMBO J.">
        <title>XMAP215 regulates microtubule dynamics through two distinct domains.</title>
        <authorList>
            <person name="Popov A.V."/>
            <person name="Pozniakovsky A."/>
            <person name="Arnal I."/>
            <person name="Antony C."/>
            <person name="Ashford A.J."/>
            <person name="Kinoshita K."/>
            <person name="Tournebize R."/>
            <person name="Hyman A.A."/>
            <person name="Karsenti E."/>
        </authorList>
    </citation>
    <scope>SUBCELLULAR LOCATION</scope>
</reference>
<reference key="3">
    <citation type="journal article" date="2002" name="Curr. Biol.">
        <title>XMAP215 is required for the microtubule-nucleating activity of centrosomes.</title>
        <authorList>
            <person name="Popov A.V."/>
            <person name="Severin F."/>
            <person name="Karsenti E."/>
        </authorList>
    </citation>
    <scope>FUNCTION</scope>
</reference>
<reference key="4">
    <citation type="journal article" date="2008" name="Cell">
        <title>XMAP215 is a processive microtubule polymerase.</title>
        <authorList>
            <person name="Brouhard G.J."/>
            <person name="Stear J.H."/>
            <person name="Noetzel T.L."/>
            <person name="Al-Bassam J."/>
            <person name="Kinoshita K."/>
            <person name="Harrison S.C."/>
            <person name="Howard J."/>
            <person name="Hyman A.A."/>
        </authorList>
    </citation>
    <scope>FUNCTION</scope>
</reference>
<reference key="5">
    <citation type="journal article" date="2011" name="Proc. Natl. Acad. Sci. U.S.A.">
        <title>XMAP215 polymerase activity is built by combining multiple tubulin-binding TOG domains and a basic lattice-binding region.</title>
        <authorList>
            <person name="Widlund P.O."/>
            <person name="Stear J.H."/>
            <person name="Pozniakovsky A."/>
            <person name="Zanic M."/>
            <person name="Reber S."/>
            <person name="Brouhard G.J."/>
            <person name="Hyman A.A."/>
            <person name="Howard J."/>
        </authorList>
    </citation>
    <scope>FUNCTION</scope>
    <scope>TOG DOMAIN</scope>
    <scope>MUTAGENESIS OF TRP-21; LYS-102; TRP-292; LYS-373; TRP-610; LYS-691; TRP-870; LYS-950; PHE-1250 AND LYS-1335</scope>
</reference>
<reference key="6">
    <citation type="journal article" date="2013" name="Nat. Cell Biol.">
        <title>XMAP215 activity sets spindle length by controlling the total mass of spindle microtubules.</title>
        <authorList>
            <person name="Reber S.B."/>
            <person name="Baumgart J."/>
            <person name="Widlund P.O."/>
            <person name="Pozniakovsky A."/>
            <person name="Howard J."/>
            <person name="Hyman A.A."/>
            <person name="Juelicher F."/>
        </authorList>
    </citation>
    <scope>FUNCTION</scope>
</reference>
<reference key="7">
    <citation type="journal article" date="2014" name="Nat. Commun.">
        <title>XTACC3-XMAP215 association reveals an asymmetric interaction promoting microtubule elongation.</title>
        <authorList>
            <person name="Mortuza G.B."/>
            <person name="Cavazza T."/>
            <person name="Garcia-Mayoral M.F."/>
            <person name="Hermida D."/>
            <person name="Peset I."/>
            <person name="Pedrero J.G."/>
            <person name="Merino N."/>
            <person name="Blanco F.J."/>
            <person name="Lyngsoe J."/>
            <person name="Bruix M."/>
            <person name="Pedersen J.S."/>
            <person name="Vernos I."/>
            <person name="Montoya G."/>
        </authorList>
    </citation>
    <scope>SUBCELLULAR LOCATION</scope>
    <scope>INTERACTION WITH TACC3</scope>
    <scope>MUTAGENESIS OF LEU-2053; LYS-2054; ILE-2060 AND LYS-2061</scope>
</reference>
<accession>Q9PT63</accession>
<organism evidence="13">
    <name type="scientific">Xenopus laevis</name>
    <name type="common">African clawed frog</name>
    <dbReference type="NCBI Taxonomy" id="8355"/>
    <lineage>
        <taxon>Eukaryota</taxon>
        <taxon>Metazoa</taxon>
        <taxon>Chordata</taxon>
        <taxon>Craniata</taxon>
        <taxon>Vertebrata</taxon>
        <taxon>Euteleostomi</taxon>
        <taxon>Amphibia</taxon>
        <taxon>Batrachia</taxon>
        <taxon>Anura</taxon>
        <taxon>Pipoidea</taxon>
        <taxon>Pipidae</taxon>
        <taxon>Xenopodinae</taxon>
        <taxon>Xenopus</taxon>
        <taxon>Xenopus</taxon>
    </lineage>
</organism>
<dbReference type="EMBL" id="AJ251130">
    <property type="protein sequence ID" value="CAB61894.1"/>
    <property type="molecule type" value="mRNA"/>
</dbReference>
<dbReference type="RefSeq" id="NP_001090169.1">
    <property type="nucleotide sequence ID" value="NM_001096700.1"/>
</dbReference>
<dbReference type="IntAct" id="Q9PT63">
    <property type="interactions" value="4"/>
</dbReference>
<dbReference type="GeneID" id="779014"/>
<dbReference type="KEGG" id="xla:779014"/>
<dbReference type="AGR" id="Xenbase:XB-GENE-6253126"/>
<dbReference type="CTD" id="779014"/>
<dbReference type="Xenbase" id="XB-GENE-6253126">
    <property type="gene designation" value="ckap5.L"/>
</dbReference>
<dbReference type="OrthoDB" id="205662at2759"/>
<dbReference type="Proteomes" id="UP000186698">
    <property type="component" value="Chromosome 4L"/>
</dbReference>
<dbReference type="Bgee" id="779014">
    <property type="expression patterns" value="Expressed in egg cell and 19 other cell types or tissues"/>
</dbReference>
<dbReference type="GO" id="GO:0005813">
    <property type="term" value="C:centrosome"/>
    <property type="evidence" value="ECO:0000318"/>
    <property type="project" value="GO_Central"/>
</dbReference>
<dbReference type="GO" id="GO:0005737">
    <property type="term" value="C:cytoplasm"/>
    <property type="evidence" value="ECO:0007669"/>
    <property type="project" value="UniProtKB-KW"/>
</dbReference>
<dbReference type="GO" id="GO:0000776">
    <property type="term" value="C:kinetochore"/>
    <property type="evidence" value="ECO:0000318"/>
    <property type="project" value="GO_Central"/>
</dbReference>
<dbReference type="GO" id="GO:0000922">
    <property type="term" value="C:spindle pole"/>
    <property type="evidence" value="ECO:0000318"/>
    <property type="project" value="GO_Central"/>
</dbReference>
<dbReference type="GO" id="GO:0043015">
    <property type="term" value="F:gamma-tubulin binding"/>
    <property type="evidence" value="ECO:0000314"/>
    <property type="project" value="Xenbase"/>
</dbReference>
<dbReference type="GO" id="GO:0008017">
    <property type="term" value="F:microtubule binding"/>
    <property type="evidence" value="ECO:0000314"/>
    <property type="project" value="Xenbase"/>
</dbReference>
<dbReference type="GO" id="GO:0061863">
    <property type="term" value="F:microtubule plus end polymerase"/>
    <property type="evidence" value="ECO:0000318"/>
    <property type="project" value="GO_Central"/>
</dbReference>
<dbReference type="GO" id="GO:0051010">
    <property type="term" value="F:microtubule plus-end binding"/>
    <property type="evidence" value="ECO:0007669"/>
    <property type="project" value="InterPro"/>
</dbReference>
<dbReference type="GO" id="GO:0051301">
    <property type="term" value="P:cell division"/>
    <property type="evidence" value="ECO:0007669"/>
    <property type="project" value="UniProtKB-KW"/>
</dbReference>
<dbReference type="GO" id="GO:0051298">
    <property type="term" value="P:centrosome duplication"/>
    <property type="evidence" value="ECO:0000318"/>
    <property type="project" value="GO_Central"/>
</dbReference>
<dbReference type="GO" id="GO:0030951">
    <property type="term" value="P:establishment or maintenance of microtubule cytoskeleton polarity"/>
    <property type="evidence" value="ECO:0000318"/>
    <property type="project" value="GO_Central"/>
</dbReference>
<dbReference type="GO" id="GO:0007020">
    <property type="term" value="P:microtubule nucleation"/>
    <property type="evidence" value="ECO:0000314"/>
    <property type="project" value="Xenbase"/>
</dbReference>
<dbReference type="GO" id="GO:0046785">
    <property type="term" value="P:microtubule polymerization"/>
    <property type="evidence" value="ECO:0000318"/>
    <property type="project" value="GO_Central"/>
</dbReference>
<dbReference type="GO" id="GO:0007052">
    <property type="term" value="P:mitotic spindle organization"/>
    <property type="evidence" value="ECO:0000318"/>
    <property type="project" value="GO_Central"/>
</dbReference>
<dbReference type="FunFam" id="1.25.10.10:FF:000052">
    <property type="entry name" value="Cytoskeleton associated protein 5"/>
    <property type="match status" value="1"/>
</dbReference>
<dbReference type="FunFam" id="1.25.10.10:FF:000019">
    <property type="entry name" value="Cytoskeleton-associated protein 5"/>
    <property type="match status" value="1"/>
</dbReference>
<dbReference type="FunFam" id="1.25.10.10:FF:000050">
    <property type="entry name" value="Cytoskeleton-associated protein 5 isoform X1"/>
    <property type="match status" value="1"/>
</dbReference>
<dbReference type="FunFam" id="1.25.10.10:FF:000068">
    <property type="entry name" value="cytoskeleton-associated protein 5 isoform X1"/>
    <property type="match status" value="1"/>
</dbReference>
<dbReference type="FunFam" id="1.25.10.10:FF:000063">
    <property type="entry name" value="Putative cytoskeleton-associated protein 5"/>
    <property type="match status" value="1"/>
</dbReference>
<dbReference type="Gene3D" id="1.25.10.10">
    <property type="entry name" value="Leucine-rich Repeat Variant"/>
    <property type="match status" value="5"/>
</dbReference>
<dbReference type="InterPro" id="IPR011989">
    <property type="entry name" value="ARM-like"/>
</dbReference>
<dbReference type="InterPro" id="IPR016024">
    <property type="entry name" value="ARM-type_fold"/>
</dbReference>
<dbReference type="InterPro" id="IPR021133">
    <property type="entry name" value="HEAT_type_2"/>
</dbReference>
<dbReference type="InterPro" id="IPR034085">
    <property type="entry name" value="TOG"/>
</dbReference>
<dbReference type="InterPro" id="IPR045110">
    <property type="entry name" value="XMAP215"/>
</dbReference>
<dbReference type="InterPro" id="IPR048491">
    <property type="entry name" value="XMAP215_CLASP_TOG"/>
</dbReference>
<dbReference type="PANTHER" id="PTHR12609">
    <property type="entry name" value="MICROTUBULE ASSOCIATED PROTEIN XMAP215"/>
    <property type="match status" value="1"/>
</dbReference>
<dbReference type="Pfam" id="PF21041">
    <property type="entry name" value="XMAP215_CLASP_TOG"/>
    <property type="match status" value="5"/>
</dbReference>
<dbReference type="SMART" id="SM01349">
    <property type="entry name" value="TOG"/>
    <property type="match status" value="5"/>
</dbReference>
<dbReference type="SUPFAM" id="SSF48371">
    <property type="entry name" value="ARM repeat"/>
    <property type="match status" value="2"/>
</dbReference>
<dbReference type="PROSITE" id="PS50077">
    <property type="entry name" value="HEAT_REPEAT"/>
    <property type="match status" value="2"/>
</dbReference>
<keyword id="KW-0131">Cell cycle</keyword>
<keyword id="KW-0132">Cell division</keyword>
<keyword id="KW-0137">Centromere</keyword>
<keyword id="KW-0158">Chromosome</keyword>
<keyword id="KW-0963">Cytoplasm</keyword>
<keyword id="KW-0206">Cytoskeleton</keyword>
<keyword id="KW-0995">Kinetochore</keyword>
<keyword id="KW-0498">Mitosis</keyword>
<keyword id="KW-1185">Reference proteome</keyword>
<keyword id="KW-0677">Repeat</keyword>
<evidence type="ECO:0000250" key="1">
    <source>
        <dbReference type="UniProtKB" id="Q14008"/>
    </source>
</evidence>
<evidence type="ECO:0000255" key="2"/>
<evidence type="ECO:0000255" key="3">
    <source>
        <dbReference type="PROSITE-ProRule" id="PRU00103"/>
    </source>
</evidence>
<evidence type="ECO:0000256" key="4">
    <source>
        <dbReference type="SAM" id="MobiDB-lite"/>
    </source>
</evidence>
<evidence type="ECO:0000269" key="5">
    <source>
    </source>
</evidence>
<evidence type="ECO:0000269" key="6">
    <source>
    </source>
</evidence>
<evidence type="ECO:0000269" key="7">
    <source>
    </source>
</evidence>
<evidence type="ECO:0000269" key="8">
    <source>
    </source>
</evidence>
<evidence type="ECO:0000269" key="9">
    <source>
    </source>
</evidence>
<evidence type="ECO:0000269" key="10">
    <source>
    </source>
</evidence>
<evidence type="ECO:0000305" key="11"/>
<evidence type="ECO:0000305" key="12">
    <source>
    </source>
</evidence>
<evidence type="ECO:0000312" key="13">
    <source>
        <dbReference type="EMBL" id="CAB61894.1"/>
    </source>
</evidence>
<proteinExistence type="evidence at protein level"/>
<gene>
    <name type="primary">ckap5-a</name>
    <name type="synonym">xmap215</name>
</gene>
<feature type="chain" id="PRO_0000437573" description="Cytoskeleton-associated protein 5-A">
    <location>
        <begin position="1"/>
        <end position="2065"/>
    </location>
</feature>
<feature type="repeat" description="HEAT 1" evidence="2">
    <location>
        <begin position="120"/>
        <end position="157"/>
    </location>
</feature>
<feature type="repeat" description="HEAT 2" evidence="2">
    <location>
        <begin position="160"/>
        <end position="197"/>
    </location>
</feature>
<feature type="repeat" description="HEAT 3" evidence="2">
    <location>
        <begin position="270"/>
        <end position="311"/>
    </location>
</feature>
<feature type="repeat" description="HEAT 4" evidence="2">
    <location>
        <begin position="314"/>
        <end position="352"/>
    </location>
</feature>
<feature type="repeat" description="HEAT 5" evidence="2">
    <location>
        <begin position="356"/>
        <end position="393"/>
    </location>
</feature>
<feature type="repeat" description="HEAT 6" evidence="2">
    <location>
        <begin position="395"/>
        <end position="432"/>
    </location>
</feature>
<feature type="repeat" description="HEAT 7" evidence="3">
    <location>
        <begin position="436"/>
        <end position="477"/>
    </location>
</feature>
<feature type="repeat" description="HEAT 8" evidence="2">
    <location>
        <begin position="652"/>
        <end position="689"/>
    </location>
</feature>
<feature type="repeat" description="HEAT 9" evidence="2">
    <location>
        <begin position="748"/>
        <end position="785"/>
    </location>
</feature>
<feature type="repeat" description="HEAT 10" evidence="2">
    <location>
        <begin position="852"/>
        <end position="889"/>
    </location>
</feature>
<feature type="repeat" description="HEAT 11" evidence="2">
    <location>
        <begin position="892"/>
        <end position="929"/>
    </location>
</feature>
<feature type="repeat" description="HEAT 12" evidence="2">
    <location>
        <begin position="933"/>
        <end position="970"/>
    </location>
</feature>
<feature type="repeat" description="HEAT 13" evidence="3">
    <location>
        <begin position="1015"/>
        <end position="1052"/>
    </location>
</feature>
<feature type="repeat" description="HEAT 14" evidence="2">
    <location>
        <begin position="1251"/>
        <end position="1288"/>
    </location>
</feature>
<feature type="repeat" description="HEAT 15" evidence="2">
    <location>
        <begin position="1295"/>
        <end position="1318"/>
    </location>
</feature>
<feature type="repeat" description="HEAT 16" evidence="2">
    <location>
        <begin position="1319"/>
        <end position="1355"/>
    </location>
</feature>
<feature type="repeat" description="HEAT 17" evidence="2">
    <location>
        <begin position="1357"/>
        <end position="1390"/>
    </location>
</feature>
<feature type="repeat" description="HEAT 18" evidence="2">
    <location>
        <begin position="1395"/>
        <end position="1432"/>
    </location>
</feature>
<feature type="region of interest" description="TOG 1" evidence="11">
    <location>
        <begin position="1"/>
        <end position="240"/>
    </location>
</feature>
<feature type="region of interest" description="TOG 2" evidence="11">
    <location>
        <begin position="264"/>
        <end position="515"/>
    </location>
</feature>
<feature type="region of interest" description="Disordered" evidence="4">
    <location>
        <begin position="500"/>
        <end position="574"/>
    </location>
</feature>
<feature type="region of interest" description="TOG 3" evidence="11">
    <location>
        <begin position="644"/>
        <end position="808"/>
    </location>
</feature>
<feature type="region of interest" description="Disordered" evidence="4">
    <location>
        <begin position="809"/>
        <end position="849"/>
    </location>
</feature>
<feature type="region of interest" description="TOG 4" evidence="11">
    <location>
        <begin position="846"/>
        <end position="1090"/>
    </location>
</feature>
<feature type="region of interest" description="Disordered" evidence="4">
    <location>
        <begin position="1074"/>
        <end position="1192"/>
    </location>
</feature>
<feature type="region of interest" description="Interaction with microtubule lattice" evidence="8">
    <location>
        <begin position="1150"/>
        <end position="1235"/>
    </location>
</feature>
<feature type="region of interest" description="TOG 5" evidence="11">
    <location>
        <begin position="1191"/>
        <end position="1460"/>
    </location>
</feature>
<feature type="region of interest" description="Disordered" evidence="4">
    <location>
        <begin position="1982"/>
        <end position="2001"/>
    </location>
</feature>
<feature type="region of interest" description="Interaction with tacc3" evidence="10">
    <location>
        <begin position="2002"/>
        <end position="2065"/>
    </location>
</feature>
<feature type="region of interest" description="Disordered" evidence="4">
    <location>
        <begin position="2028"/>
        <end position="2065"/>
    </location>
</feature>
<feature type="compositionally biased region" description="Low complexity" evidence="4">
    <location>
        <begin position="538"/>
        <end position="568"/>
    </location>
</feature>
<feature type="compositionally biased region" description="Acidic residues" evidence="4">
    <location>
        <begin position="829"/>
        <end position="841"/>
    </location>
</feature>
<feature type="compositionally biased region" description="Low complexity" evidence="4">
    <location>
        <begin position="1074"/>
        <end position="1115"/>
    </location>
</feature>
<feature type="compositionally biased region" description="Polar residues" evidence="4">
    <location>
        <begin position="1126"/>
        <end position="1163"/>
    </location>
</feature>
<feature type="compositionally biased region" description="Low complexity" evidence="4">
    <location>
        <begin position="2038"/>
        <end position="2048"/>
    </location>
</feature>
<feature type="compositionally biased region" description="Basic and acidic residues" evidence="4">
    <location>
        <begin position="2051"/>
        <end position="2065"/>
    </location>
</feature>
<feature type="mutagenesis site" description="Abolishes binding to tubulin and microtubule polymerase activity; when associated with A-102; A-292; A-373; A-610; A-691; A-870; A-950; A-1250 and A-1335. Greatly impairs microtubule polymerase activity; when associated with A-102; A-292 and A-373." evidence="8">
    <original>W</original>
    <variation>A</variation>
    <location>
        <position position="21"/>
    </location>
</feature>
<feature type="mutagenesis site" description="Abolishes binding to tubulin and microtubule polymerase activity; when associated with A-21; A-292; A-373; A-610; A-691; A-870; A-950; A-1250 and A-1335. Greatly impairs microtubule polymerase activity; when associated with A-21; A-292 and A-373." evidence="8">
    <original>K</original>
    <variation>A</variation>
    <location>
        <position position="102"/>
    </location>
</feature>
<feature type="mutagenesis site" description="Abolishes binding to tubulin and microtubule polymerase activity; when associated with A-21; A-102; A-373; A-610; A-691; A-870; A-950; A-1250 and A-1335. Greatly impairs microtubule polymerase activity; when associated with A-21; A-102 and A-373." evidence="8">
    <original>W</original>
    <variation>A</variation>
    <location>
        <position position="292"/>
    </location>
</feature>
<feature type="mutagenesis site" description="Abolishes binding to tubulin and microtubule polymerase activity; when associated with A-21; A-102; A-292; A-610; A-691; A-870; A-950; A-1250 and A-1335. Greatly impairs microtubule polymerase activity; when associated with A-21; A-102 and A-292." evidence="8">
    <original>K</original>
    <variation>A</variation>
    <location>
        <position position="373"/>
    </location>
</feature>
<feature type="mutagenesis site" description="Abolishes binding to tubulin and microtubule polymerase activity; when associated with A-21; A-102; A-292; A-373; A-691; A-870; A-950; A-1250 and A-1335. Slightly impairs microtubule polymerase activity; when associated with A-691; A-870; A-950; A-1250 and A-1335." evidence="8">
    <original>W</original>
    <variation>A</variation>
    <location>
        <position position="610"/>
    </location>
</feature>
<feature type="mutagenesis site" description="Abolishes binding to tubulin and microtubule polymerase activity; when associated with A-21; A-102; A-292; A-373; A-610; A-870; A-950; A-1250 and A-1335. Slightly impairs microtubule polymerase activity; when associated with A-610; A-870; A-950; A-1250 and A-1335." evidence="8">
    <original>K</original>
    <variation>A</variation>
    <location>
        <position position="691"/>
    </location>
</feature>
<feature type="mutagenesis site" description="Abolishes binding to tubulin and microtubule polymerase activity; when associated with A-21; A-102; A-292; A-373; A-610; A-691; A-950; A-1250 and A-1335. Slightly impairs microtubule polymerase activity; when associated with A-610; A-691; A-950; A-1250 and A-1335." evidence="8">
    <original>W</original>
    <variation>A</variation>
    <location>
        <position position="870"/>
    </location>
</feature>
<feature type="mutagenesis site" description="Abolishes binding to tubulin and microtubule polymerase activity; when associated with A-21; A-102; A-292; A-373; A-610; A-691; A-870; A-1250 and A-1335. Slightly impairs microtubule polymerase activity; when associated with A-610; A-691; A-870; A-1250 and A-1335." evidence="8">
    <original>K</original>
    <variation>A</variation>
    <location>
        <position position="950"/>
    </location>
</feature>
<feature type="mutagenesis site" description="Abolishes binding to tubulin and microtubule polymerase activity; when associated with A-21; A-102; A-292; A-373; A-610; A-691; A-870; A-950 and A-1335. Slightly impairs microtubule polymerase activity; when associated with A-1335." evidence="8">
    <original>F</original>
    <variation>A</variation>
    <location>
        <position position="1250"/>
    </location>
</feature>
<feature type="mutagenesis site" description="Abolishes binding to tubulin and microtubule polymerase activity; when associated with A-21; A-102; A-292; A-373; A-610; A-691; A-870; A-950 and A-1250. Slightly impairs microtubule polymerase activity; when associated with A-1250." evidence="8">
    <original>K</original>
    <variation>A</variation>
    <location>
        <position position="1335"/>
    </location>
</feature>
<feature type="mutagenesis site" description="Disrupts interaction with tacc3; when associated with S-2060." evidence="10">
    <original>L</original>
    <variation>S</variation>
    <location>
        <position position="2053"/>
    </location>
</feature>
<feature type="mutagenesis site" description="Disrupts interaction with tacc3; when associated with D-2061." evidence="10">
    <original>K</original>
    <variation>D</variation>
    <location>
        <position position="2054"/>
    </location>
</feature>
<feature type="mutagenesis site" description="Disrupts interaction with tacc3; when associated with S-2053." evidence="10">
    <original>I</original>
    <variation>S</variation>
    <location>
        <position position="2060"/>
    </location>
</feature>
<feature type="mutagenesis site" description="Disrupts interaction with tacc3; when associated with D-2054." evidence="10">
    <original>K</original>
    <variation>D</variation>
    <location>
        <position position="2061"/>
    </location>
</feature>
<sequence length="2065" mass="228390">MGDDSEWMKLPIDQKCEHKVWKARLNGYEEAVKLFQKIVDEKSPEWSKYLGLIKRFVTESNAVAQLKGLEAALVYVENAHVAGKTTGEVVNGVVNKVFNQPKARAKELGADICLMYVEIEKAEVVQEELLKGLDNKNPKIVVACVETVRKALSEFGSKIMTLKPIIKVLPKLFESREKAIRDEAKLLAVEIYRWIRDALRPPLQNINPVQLKELEEEWVKLPQSAPKQTRFLRSQQDLKAKFEQQQAAGDDGGDDGEEEIVPQVDAYELLEAVEILSKLPKDFYDKIEAKKWQERKEALEAVEALVKNPKIEAGDFADLVKALKTVVGKDTNVMLVALAAKCIAGLAAGLRKKFGSYAGHIVPTILEKFKEKKPQVVQALQEAIDAVFLTTTLQNISEDVLAVMDNKNPAIKQQTSLFLARSFRHCTPSTLPKSLLKPFCVALLKQINDSAPEVRDAAFEALGTAQKVVGEKAVNPFLAEVDKLKLDRIKECADKAELANGKKGGAAAGEKKETKAPAAAPGKPVPNQGAAAEKDAGKAAAAPKKAPAAKPGGPVKKAKAPASSGATAKGKKAVENKEIIEQELSPEACEERAAAVLPASCMQQLDSSNWKERLASMEEFQKTVESMERNDIPCQALVKMLAKKPGFKETNFQVMQMKLHIVALIAQKGNFSKTSACAVLDGLVDKVGDVKCGGNAKEALSGIAEACTLPWTAEQVVSLAFAQKNPKNQSETLNWLSNAIKEFGFTGINVKAFISNVKTALAATNPAIRTSAITLLGVMYLYMGAPLRMFFEEEKPALLSQIDAEFEKMKGQTPPVSIRGSKHGSGRDEGEEGEEQDEDAPADVTDLLPRTDISDKISSDLVSKIEDKNWKIRKEGLDEVTAIINEAKFIQPSIGELPSALKGRLNDSNKILVQQTLTILQQLSTAMGHNIKQHVKNLGMPIITVLGDSKANVRAAALGTLKSWVDQTGMKDWLEGEDLSEELKKENPFLRQELLGWLAEKLPSMRTVPSDLQLCVPYLYNCLEDRNGDVRKKAQEALPIFMMHIGFEKMSKATSKLKPASKDQVVALLEKAKASMPAKPAGPPGKASSKQPPAVAQASASPPPAASSDSGSSTSDYKPDPKKTKPGTQASKAKTQSVSSEGNTSLNPSNTSLTPSKANTSLSKAKPAKQTLPGKKAPSKPNAKDEEDKSGPIYIIVPNGKEQRVKDEKALKVLKWNFTTPRDEYIEQLKTQMSPCIARWLQDELFHADFQRQIKGLAVMTEHLESEKEGVISCLDLVLKWFTLRFFDTNTSVLMKCLEYLKLLFIMLSQEEYHLTEMEGTSFLPYLMLKVGEPKDIVRKDVRAILTKMCQVYPASKMFNFVMEGTKSKNSKQRAECLEELGCLVESYGMNVCQPTPAKALKEIAIHIGDRDTTVRNAALNTIVTVYNVHGEQVFKLIGNLSEKDMSMLEERIKRAGKKQAAAAPAKQVEEKPQRVQSANASILRKAPPEDMSSKLNQARNMGGHTEPSHSVPREFQLDLDEIENDNGTVRCEMPALVQHKLDEIFEPVLIPEPKIRAVSPHFDDMHSNTASTINFVISQVASVDINASIQALAQIDEVLRQEDKAEAMSGHIDQFLIATFMQLRLAYNTHMADERLDKDDIVRLYSCIIGNMISLFQMESLAREASTGVLKDLMHGLISLMLDARIEDLEEGQQVVRSVNLLVVKVLEKSDQTNIISALLMLLQDSLLATASSPNFSELVMKCLWRMIRLLPEAINNLNLDRILLDIHNFMRVLPKEKLKQHKSEMPMRTLKTLLHTLCKLKGPKIMDHLSMIENKHESELEAHLLRVMKHSIDRTGSKGDKETEKGASCIEDKVGKANVSDFLAEMFKKIGSKENTKEGLAELYEYKKKYSDADIKPFLKNSSQFFQSYVERGLRLIEMEREGKARIAPNTGMSTHVTEMTPLPTVTNTAAPVSNTNGEEVGPSVYLERLKILRQRCGLDNAKQDERPPLTSLLSKSSAPAVVSSTDMLHSKLSQLRESREQFQHVELDSNQTYPSTTTSSSASSTNIDDLKKRLERIKSSRK</sequence>
<comment type="function">
    <text evidence="1 6 7 8 9">Binds to the plus end of microtubules and regulates microtubule dynamics and microtubule organization. Acts as a processive microtubule polymerase. Promotes cytoplasmic microtubule nucleation and elongation (PubMed:12176362, PubMed:18191222, PubMed:21282620). Plays a major role in organizing spindle poles (PubMed:23974040). In spindle formation protects kinetochore microtubules from depolymerization by kif2c and has an essential role in centrosomal microtubule assembly independently of kif2c activity. Contributes to centrosome integrity. Acts as a component of the TACC3/ch-TOG/clathrin complex proposed to contribute to stabilization of kinetochore fibers of the mitotic spindle by acting as inter-microtubule bridge. Enhances the strength of NDC80 complex-mediated kinetochore-tip microtubule attachments (By similarity).</text>
</comment>
<comment type="subunit">
    <text evidence="1 10">Interacts with tacc3; two molecules of ckap5 interact with 1 molecule of tacc3 probably mediated by coiled coil domains forming a four-helix bundle. Interacts with tacc3 and clathrin forming the TACC3/ch-TOG/clathrin complex located at spindle inter-microtubules bridges. Interacts with ndc80; indicative for an association with the NDC80 comnplex (By similarity).</text>
</comment>
<comment type="subcellular location">
    <subcellularLocation>
        <location evidence="10">Cytoplasm</location>
        <location evidence="10">Cytoskeleton</location>
        <location evidence="10">Spindle pole</location>
    </subcellularLocation>
    <subcellularLocation>
        <location evidence="1">Cytoplasm</location>
        <location evidence="1">Cytoskeleton</location>
        <location evidence="1">Spindle</location>
    </subcellularLocation>
    <subcellularLocation>
        <location evidence="5">Cytoplasm</location>
        <location evidence="5">Cytoskeleton</location>
        <location evidence="5">Microtubule organizing center</location>
        <location evidence="5">Centrosome</location>
    </subcellularLocation>
    <subcellularLocation>
        <location evidence="5">Cytoplasm</location>
        <location evidence="5">Cytoskeleton</location>
    </subcellularLocation>
    <subcellularLocation>
        <location evidence="1">Chromosome</location>
        <location evidence="1">Centromere</location>
        <location evidence="1">Kinetochore</location>
    </subcellularLocation>
</comment>
<comment type="domain">
    <text evidence="1 12">The TOG (tumor overexpressed gene) domains are arranged in a N-terminal pentameric array with each domain composed of six (for the most part non-canonical) HEAT repeats forming a oblong paddle-like structure. Intra-HEAT loops are positioned along a face of the TOG domain and bind to a single alpha/beta-tubulin heterodimer. The TOG domains in the array seem to be structurally and functionally polarized. Differential functions may range from microtubule (MT) lattice binding and/or free tubulin heterodimer binding to potentiating stable incorporation of tubulin into the MT lattice. TOG 1 and TOG 2 are critical for microtubule polymerase activity.</text>
</comment>
<comment type="similarity">
    <text evidence="11">Belongs to the TOG/XMAP215 family.</text>
</comment>